<organism>
    <name type="scientific">Escherichia coli (strain UTI89 / UPEC)</name>
    <dbReference type="NCBI Taxonomy" id="364106"/>
    <lineage>
        <taxon>Bacteria</taxon>
        <taxon>Pseudomonadati</taxon>
        <taxon>Pseudomonadota</taxon>
        <taxon>Gammaproteobacteria</taxon>
        <taxon>Enterobacterales</taxon>
        <taxon>Enterobacteriaceae</taxon>
        <taxon>Escherichia</taxon>
    </lineage>
</organism>
<proteinExistence type="inferred from homology"/>
<name>YUBK_ECOUT</name>
<geneLocation type="plasmid">
    <name>pUTI89</name>
</geneLocation>
<dbReference type="EMBL" id="CP000244">
    <property type="protein sequence ID" value="ABE10660.1"/>
    <property type="molecule type" value="Genomic_DNA"/>
</dbReference>
<dbReference type="KEGG" id="eci:UTI89_P084"/>
<dbReference type="HOGENOM" id="CLU_157847_0_0_6"/>
<dbReference type="Proteomes" id="UP000001952">
    <property type="component" value="Plasmid pUTI89"/>
</dbReference>
<keyword id="KW-0614">Plasmid</keyword>
<keyword id="KW-0732">Signal</keyword>
<feature type="signal peptide" evidence="1">
    <location>
        <begin position="1"/>
        <end position="30"/>
    </location>
</feature>
<feature type="chain" id="PRO_0000269543" description="Uncharacterized protein YubK">
    <location>
        <begin position="31"/>
        <end position="119"/>
    </location>
</feature>
<accession>Q1R1V4</accession>
<gene>
    <name type="primary">yubK</name>
    <name type="ordered locus">UTI89_P084</name>
</gene>
<evidence type="ECO:0000255" key="1"/>
<reference key="1">
    <citation type="journal article" date="2006" name="Proc. Natl. Acad. Sci. U.S.A.">
        <title>Identification of genes subject to positive selection in uropathogenic strains of Escherichia coli: a comparative genomics approach.</title>
        <authorList>
            <person name="Chen S.L."/>
            <person name="Hung C.-S."/>
            <person name="Xu J."/>
            <person name="Reigstad C.S."/>
            <person name="Magrini V."/>
            <person name="Sabo A."/>
            <person name="Blasiar D."/>
            <person name="Bieri T."/>
            <person name="Meyer R.R."/>
            <person name="Ozersky P."/>
            <person name="Armstrong J.R."/>
            <person name="Fulton R.S."/>
            <person name="Latreille J.P."/>
            <person name="Spieth J."/>
            <person name="Hooton T.M."/>
            <person name="Mardis E.R."/>
            <person name="Hultgren S.J."/>
            <person name="Gordon J.I."/>
        </authorList>
    </citation>
    <scope>NUCLEOTIDE SEQUENCE [LARGE SCALE GENOMIC DNA]</scope>
    <source>
        <strain>UTI89 / UPEC</strain>
    </source>
</reference>
<protein>
    <recommendedName>
        <fullName>Uncharacterized protein YubK</fullName>
    </recommendedName>
</protein>
<sequence length="119" mass="12551">MCPECFFLMLCFCGYCSSSSSSFRSSPVYGFPGRPPGGAGCRERSQRSCLRPGGLPSLTQNPRLAATVPVAPPLSRRGLRSWHPGKTTPGCKAQRRFAHALSVVAAGPCSLPAGCHTPV</sequence>